<feature type="chain" id="PRO_0000283127" description="Putative F-box/FBD/LRR-repeat protein At5g44960">
    <location>
        <begin position="1"/>
        <end position="436"/>
    </location>
</feature>
<feature type="domain" description="F-box" evidence="1">
    <location>
        <begin position="4"/>
        <end position="50"/>
    </location>
</feature>
<feature type="repeat" description="LRR 1">
    <location>
        <begin position="287"/>
        <end position="310"/>
    </location>
</feature>
<feature type="domain" description="FBD">
    <location>
        <begin position="355"/>
        <end position="407"/>
    </location>
</feature>
<feature type="repeat" description="LRR 2">
    <location>
        <begin position="397"/>
        <end position="420"/>
    </location>
</feature>
<reference key="1">
    <citation type="journal article" date="1998" name="DNA Res.">
        <title>Structural analysis of Arabidopsis thaliana chromosome 5. V. Sequence features of the regions of 1,381,565 bp covered by twenty one physically assigned P1 and TAC clones.</title>
        <authorList>
            <person name="Kaneko T."/>
            <person name="Kotani H."/>
            <person name="Nakamura Y."/>
            <person name="Sato S."/>
            <person name="Asamizu E."/>
            <person name="Miyajima N."/>
            <person name="Tabata S."/>
        </authorList>
    </citation>
    <scope>NUCLEOTIDE SEQUENCE [LARGE SCALE GENOMIC DNA]</scope>
    <source>
        <strain>cv. Columbia</strain>
    </source>
</reference>
<reference key="2">
    <citation type="journal article" date="2017" name="Plant J.">
        <title>Araport11: a complete reannotation of the Arabidopsis thaliana reference genome.</title>
        <authorList>
            <person name="Cheng C.Y."/>
            <person name="Krishnakumar V."/>
            <person name="Chan A.P."/>
            <person name="Thibaud-Nissen F."/>
            <person name="Schobel S."/>
            <person name="Town C.D."/>
        </authorList>
    </citation>
    <scope>GENOME REANNOTATION</scope>
    <source>
        <strain>cv. Columbia</strain>
    </source>
</reference>
<comment type="sequence caution" evidence="2">
    <conflict type="erroneous gene model prediction">
        <sequence resource="EMBL-CDS" id="AED95180"/>
    </conflict>
</comment>
<comment type="sequence caution" evidence="2">
    <conflict type="erroneous gene model prediction">
        <sequence resource="EMBL-CDS" id="BAB10879"/>
    </conflict>
</comment>
<protein>
    <recommendedName>
        <fullName>Putative F-box/FBD/LRR-repeat protein At5g44960</fullName>
    </recommendedName>
</protein>
<dbReference type="EMBL" id="AB010693">
    <property type="protein sequence ID" value="BAB10879.1"/>
    <property type="status" value="ALT_SEQ"/>
    <property type="molecule type" value="Genomic_DNA"/>
</dbReference>
<dbReference type="EMBL" id="CP002688">
    <property type="protein sequence ID" value="AED95180.1"/>
    <property type="status" value="ALT_SEQ"/>
    <property type="molecule type" value="Genomic_DNA"/>
</dbReference>
<dbReference type="RefSeq" id="NP_199309.2">
    <property type="nucleotide sequence ID" value="NM_123864.2"/>
</dbReference>
<dbReference type="BioGRID" id="19776">
    <property type="interactions" value="2"/>
</dbReference>
<dbReference type="FunCoup" id="Q9FLA1">
    <property type="interactions" value="2"/>
</dbReference>
<dbReference type="IntAct" id="Q9FLA1">
    <property type="interactions" value="2"/>
</dbReference>
<dbReference type="STRING" id="3702.Q9FLA1"/>
<dbReference type="PaxDb" id="3702-AT5G44960.1"/>
<dbReference type="GeneID" id="834527"/>
<dbReference type="KEGG" id="ath:AT5G44960"/>
<dbReference type="Araport" id="AT5G44960"/>
<dbReference type="TAIR" id="AT5G44960"/>
<dbReference type="HOGENOM" id="CLU_010721_1_3_1"/>
<dbReference type="InParanoid" id="Q9FLA1"/>
<dbReference type="PRO" id="PR:Q9FLA1"/>
<dbReference type="Proteomes" id="UP000006548">
    <property type="component" value="Chromosome 5"/>
</dbReference>
<dbReference type="ExpressionAtlas" id="Q9FLA1">
    <property type="expression patterns" value="baseline and differential"/>
</dbReference>
<dbReference type="CDD" id="cd22160">
    <property type="entry name" value="F-box_AtFBL13-like"/>
    <property type="match status" value="1"/>
</dbReference>
<dbReference type="Gene3D" id="3.80.10.10">
    <property type="entry name" value="Ribonuclease Inhibitor"/>
    <property type="match status" value="1"/>
</dbReference>
<dbReference type="InterPro" id="IPR036047">
    <property type="entry name" value="F-box-like_dom_sf"/>
</dbReference>
<dbReference type="InterPro" id="IPR053781">
    <property type="entry name" value="F-box_AtFBL13-like"/>
</dbReference>
<dbReference type="InterPro" id="IPR001810">
    <property type="entry name" value="F-box_dom"/>
</dbReference>
<dbReference type="InterPro" id="IPR006566">
    <property type="entry name" value="FBD"/>
</dbReference>
<dbReference type="InterPro" id="IPR050232">
    <property type="entry name" value="FBL13/AtMIF1-like"/>
</dbReference>
<dbReference type="InterPro" id="IPR032675">
    <property type="entry name" value="LRR_dom_sf"/>
</dbReference>
<dbReference type="InterPro" id="IPR055411">
    <property type="entry name" value="LRR_FXL15/At3g58940/PEG3-like"/>
</dbReference>
<dbReference type="PANTHER" id="PTHR31900">
    <property type="entry name" value="F-BOX/RNI SUPERFAMILY PROTEIN-RELATED"/>
    <property type="match status" value="1"/>
</dbReference>
<dbReference type="PANTHER" id="PTHR31900:SF33">
    <property type="entry name" value="PROTEIN WITH RNI-LIKE_FBD-LIKE DOMAIN"/>
    <property type="match status" value="1"/>
</dbReference>
<dbReference type="Pfam" id="PF00646">
    <property type="entry name" value="F-box"/>
    <property type="match status" value="1"/>
</dbReference>
<dbReference type="Pfam" id="PF08387">
    <property type="entry name" value="FBD"/>
    <property type="match status" value="1"/>
</dbReference>
<dbReference type="Pfam" id="PF24758">
    <property type="entry name" value="LRR_At5g56370"/>
    <property type="match status" value="1"/>
</dbReference>
<dbReference type="SMART" id="SM00579">
    <property type="entry name" value="FBD"/>
    <property type="match status" value="1"/>
</dbReference>
<dbReference type="SUPFAM" id="SSF81383">
    <property type="entry name" value="F-box domain"/>
    <property type="match status" value="1"/>
</dbReference>
<dbReference type="SUPFAM" id="SSF52047">
    <property type="entry name" value="RNI-like"/>
    <property type="match status" value="1"/>
</dbReference>
<dbReference type="PROSITE" id="PS50181">
    <property type="entry name" value="FBOX"/>
    <property type="match status" value="1"/>
</dbReference>
<name>FDL35_ARATH</name>
<evidence type="ECO:0000255" key="1">
    <source>
        <dbReference type="PROSITE-ProRule" id="PRU00080"/>
    </source>
</evidence>
<evidence type="ECO:0000305" key="2"/>
<proteinExistence type="predicted"/>
<accession>Q9FLA1</accession>
<accession>F4KBR1</accession>
<gene>
    <name type="ordered locus">At5g44960</name>
    <name type="ORF">K21C13.15</name>
</gene>
<organism>
    <name type="scientific">Arabidopsis thaliana</name>
    <name type="common">Mouse-ear cress</name>
    <dbReference type="NCBI Taxonomy" id="3702"/>
    <lineage>
        <taxon>Eukaryota</taxon>
        <taxon>Viridiplantae</taxon>
        <taxon>Streptophyta</taxon>
        <taxon>Embryophyta</taxon>
        <taxon>Tracheophyta</taxon>
        <taxon>Spermatophyta</taxon>
        <taxon>Magnoliopsida</taxon>
        <taxon>eudicotyledons</taxon>
        <taxon>Gunneridae</taxon>
        <taxon>Pentapetalae</taxon>
        <taxon>rosids</taxon>
        <taxon>malvids</taxon>
        <taxon>Brassicales</taxon>
        <taxon>Brassicaceae</taxon>
        <taxon>Camelineae</taxon>
        <taxon>Arabidopsis</taxon>
    </lineage>
</organism>
<sequence length="436" mass="50766">MEECDYINELPDSLLTQILLDLRTKDSVKTSVSSKRWRNLWLNVPGLDLFSLQFTNPHHEEGLIKFMDRFMESNCRSRLQKFMIRYFECNGYRDRFMELIGTVVDCGIQHLYVYMHTCNRVDFIRQNIYKSKTLVSLKLYNVELKNPDFVVSLPCLKILKLMKICYGEDGPLVVEKLISGCPVLEDLELIKPFDILTQDVILFLRVSSQTLKSLRLYFATNGSVEIDAPRLKYMTFYESRFDRIMVKNMSSLFSIEIRAKSSFEYGGLLKAEDPRKRAIICDFLTVISSVRHMIISGSILEELHSYSKLGWIPQFRNLYHLQASFFGTSLQLLPTFLESCPNLKNLIMDYGAFKEENIDFHEVPQCLISTLEYVHINKLMMMEQSGIKLVNYFIENSAVLKKLTLRFSFFSSIESESYKKLLTSTKLSPTCQVIFV</sequence>
<keyword id="KW-0433">Leucine-rich repeat</keyword>
<keyword id="KW-1185">Reference proteome</keyword>
<keyword id="KW-0677">Repeat</keyword>